<proteinExistence type="evidence at protein level"/>
<sequence length="2512" mass="274782">MEDVVIAGIAGKLPESENLQEFWENLLNGVDMVTEDDRRWKPGIYGLPKRNGKLKDIKKFDASFFGVHPKQAHTMDPQLRLLLEVSYEAILDGGINPTALRGTDTGVWVGASGSEALEALSQDPEELLGYSMTGCQRAMLANRISYFYDFTGPSLTIDTACSSSLMALENAYKAIRHGQCSAALVGGVNILLKPNTSVQFMKLGMLSPDGACKAFDVSGNGYCRSEAVVVVLLTKKSMAKRVYATIVNAGSNTDGFKEQGVTFPSGEMQQQLVGSLYRECGIKPGDVEYVEAHGTGTKVGDPQEVNGIVNVFCQCEREPLLIGSTKSNMGHPEPASGLAALAKVILSLEHGLWAPNLHFNDPNPDIPALHDGSLKVVCKPTPVKGGLVSINSFGFGGSNAHVILRPNEKKCQPQETCNLPRLVQVCGRTQEAVEILIEESRKHGGCSPFLSLLSDISAVPVSSMPYRGYTLVGTESDITEIQQVQASGRPLWYICSGMGTQWKGMGLSLMKLDLFRQSILRSDEALKSTGLKVSDLLLNADENTFDDTVHAFVGLAAIQIAQIDVLKAAGLQPDGILGHSVGELACGYADNSLSHEEAVLAAYWRGRCVKEAKLPPGGMAAVGLTWEECKQRCPPNVVPACHNSEDTVTVSGPLDSVSEFVTKLKKDGVFAKEVRRAGVAFHSYYMASIAPALLSALKKVIPHPKPRSARWISTSIPESQWQSDLARNSSAEYHVNNLVNPVLFHEGLKHIPENAVVVEIAPHALLQAILRRTLKPTCTILPLMKKDHKNNLEFFLTQTGKIHLTGINVLGNNLFPPVEYPVPVGTPLISPYIKWDHSQDWDVPKAEDFPSGSKGSASASVYNIDVSPDSPDHYLVGHCIDGRVLYPATGYLVLAWRTLARSLGMVMEQTAVMFEEVTIHQATILPKKGSTQLEVRIMPASHSFEVSGNGNLAVSGKISLLENDALKNFHNQLADFQSQANVTAKSGLLMEDVYQELHLRGYNYGPTFQGVLECNSEGSAGKILWNGNWVTFLDTLLHLIVLAETGRSLRLPTRIRSVYIDPVLHQEQVYQYQDNVEAFDVVVDRCLDSLKAGGVQINGLHASVAPRRQQERISPTLEKFSFVPYIESDCLSSSTQLHAYLEHCKGLIQKLQAKMALHGVKLVIHGLETKGAAAGSPPAQKGLQHILTEICRLELNGNPHSELEQIVTQEKMHLQDDPLLNGLLDSSELKTCLDVAKENTTSHRMKIVEALAGSGRLFSRVQSILNTQPLLQLDYIATDCTPETLSDNETELHDAGISFSQWDPSSLPSGNLTNADLAVCNCSTSVLGNTAEIISNLAAAVKEGGFVLLHTLLKEETLGEIVSFLTSPDLQQKHSFLSQAQWEELFSKASLNLVAMKRSFFGSVIFLCRRQSPAKAPILLPVDDTHYKWVDSLKEILADSSEQPLWLTATNCGNSGILGMVNCLRLEAEGHRIRCVFVSNLSPSSTVPATSLSSLEMQKIIERDLVMNVYRDGKWGSFRHLPLQQAQPQELTECAYVNVLTRGDLSSLRWIVSPLRHFQTTNPNVQLCKVYYASLNFWDIMLATGKLSPDAIPGNWTLQQCMLGMEFSGRDLAGRRVMGLLPAKGLATVVDCDKRFLWEVPENWTLEEAASVPVVYATAYYALVVRGGMKKGESVLIHSGSGGVGQAAIAIALSMGCRVFATVGSAEKREYLQARFPQLDANSFASSRNTTFQQHILRVTNGKGVSLVLNSLAEEKLQASLRCLAQHGRFLEIGKFDLSNNSQLGMALFLKNVAFHGILLDSIFEEGNQEWEVVSELLTKGIKDGVVKPLRTTVFGKEEVEAAFRFMAQGKHIGKVMIKIQEEEKQYPLRSEPVKLSAISRTSCPPTKSYIITGGLGGFGLELAQWLIERGAQKLVLTSRSGIRTGYQAKCVREWKALGIQVLVSTSDVGTLEGTQLLIEEALKLGPVGGIFNLAVVLKDAMIENQTPELFWEVNKPKYSGTLHLDWVTRKKCPDLDYFVVFSSVSCGRGNAGQSNYGFANSAMERICEQRHHDGLPGLAVQWGAIGDVGILKAMGNREVVIGGTVLQQISSCLEVLDMFLNQPHPVMSSFVLAEKVSVKSEGGSQRDLVEAVAHILGVRDVSSLNAESSLADLGLDSLMGVEVRQTLERDYDIVMTMREIRLLTINKLRELSSKTGTAEELKPSQVLKTGPGEPPKLDLNNLLVNPEGPTITRLNEVQSTERPLFLVHPIEGSIAVFYTLASKLHMPCYGLQCTKAAPLDSIQSLASYYIDCMKQIQPEGPYRIAGYSFGACVAFEMCSQLQAQQNASHALNSLFLFDGSHSFVAAYTQSYRAKLTQGNEAALETEALCAFVQQFTGIEYNKLLEILLPLEDLEARVNAAADLITQIHKNINREALSFAAASFYHKLKAADKYIPESKYHGNVTLMRAKTHNEYEEGLGGDYRLSEVCDGKVSVHIIEGDHRTLLEGDGVESIIGIIHGSLAEPRVSVREG</sequence>
<keyword id="KW-0007">Acetylation</keyword>
<keyword id="KW-0025">Alternative splicing</keyword>
<keyword id="KW-0903">Direct protein sequencing</keyword>
<keyword id="KW-0275">Fatty acid biosynthesis</keyword>
<keyword id="KW-0276">Fatty acid metabolism</keyword>
<keyword id="KW-0378">Hydrolase</keyword>
<keyword id="KW-0444">Lipid biosynthesis</keyword>
<keyword id="KW-0443">Lipid metabolism</keyword>
<keyword id="KW-0456">Lyase</keyword>
<keyword id="KW-0511">Multifunctional enzyme</keyword>
<keyword id="KW-0520">NAD</keyword>
<keyword id="KW-0521">NADP</keyword>
<keyword id="KW-0560">Oxidoreductase</keyword>
<keyword id="KW-0596">Phosphopantetheine</keyword>
<keyword id="KW-0597">Phosphoprotein</keyword>
<keyword id="KW-0663">Pyridoxal phosphate</keyword>
<keyword id="KW-1185">Reference proteome</keyword>
<keyword id="KW-0702">S-nitrosylation</keyword>
<keyword id="KW-0808">Transferase</keyword>
<feature type="initiator methionine" description="Removed" evidence="12">
    <location>
        <position position="1"/>
    </location>
</feature>
<feature type="chain" id="PRO_0000180273" description="Fatty acid synthase">
    <location>
        <begin position="2"/>
        <end position="2512"/>
    </location>
</feature>
<feature type="domain" description="Ketosynthase family 3 (KS3)" evidence="5">
    <location>
        <begin position="2"/>
        <end position="406"/>
    </location>
</feature>
<feature type="domain" description="PKS/mFAS DH" evidence="6">
    <location>
        <begin position="844"/>
        <end position="1111"/>
    </location>
</feature>
<feature type="domain" description="Carrier" evidence="4">
    <location>
        <begin position="2120"/>
        <end position="2200"/>
    </location>
</feature>
<feature type="region of interest" description="Acyl and malonyl transferases">
    <location>
        <begin position="427"/>
        <end position="815"/>
    </location>
</feature>
<feature type="region of interest" description="N-terminal hotdog fold" evidence="6">
    <location>
        <begin position="844"/>
        <end position="967"/>
    </location>
</feature>
<feature type="region of interest" description="C-terminal hotdog fold" evidence="6">
    <location>
        <begin position="984"/>
        <end position="1111"/>
    </location>
</feature>
<feature type="region of interest" description="Enoyl reductase">
    <location>
        <begin position="1638"/>
        <end position="1866"/>
    </location>
</feature>
<feature type="region of interest" description="Beta-ketoacyl reductase">
    <location>
        <begin position="1867"/>
        <end position="2119"/>
    </location>
</feature>
<feature type="region of interest" description="Thioesterase">
    <location>
        <begin position="2209"/>
        <end position="2511"/>
    </location>
</feature>
<feature type="active site" description="For beta-ketoacyl synthase activity" evidence="5">
    <location>
        <position position="161"/>
    </location>
</feature>
<feature type="active site" description="For beta-ketoacyl synthase activity" evidence="5">
    <location>
        <position position="293"/>
    </location>
</feature>
<feature type="active site" description="For beta-ketoacyl synthase activity" evidence="5">
    <location>
        <position position="331"/>
    </location>
</feature>
<feature type="active site" description="For acyl/malonyl transferase activity" evidence="7">
    <location>
        <position position="580"/>
    </location>
</feature>
<feature type="active site" description="Proton acceptor; for dehydratase activity" evidence="6">
    <location>
        <position position="878"/>
    </location>
</feature>
<feature type="active site" description="Proton donor; for dehydratase activity" evidence="6">
    <location>
        <position position="1034"/>
    </location>
</feature>
<feature type="active site" description="For thioesterase activity" evidence="7">
    <location>
        <position position="2309"/>
    </location>
</feature>
<feature type="active site" description="For thioesterase activity" evidence="7">
    <location>
        <position position="2482"/>
    </location>
</feature>
<feature type="binding site" evidence="2">
    <location>
        <begin position="646"/>
        <end position="647"/>
    </location>
    <ligand>
        <name>an acyl-CoA</name>
        <dbReference type="ChEBI" id="CHEBI:58342"/>
    </ligand>
</feature>
<feature type="binding site" evidence="2">
    <location>
        <position position="670"/>
    </location>
    <ligand>
        <name>an acyl-CoA</name>
        <dbReference type="ChEBI" id="CHEBI:58342"/>
    </ligand>
</feature>
<feature type="binding site" evidence="2">
    <location>
        <position position="772"/>
    </location>
    <ligand>
        <name>an acyl-CoA</name>
        <dbReference type="ChEBI" id="CHEBI:58342"/>
    </ligand>
</feature>
<feature type="binding site">
    <location>
        <begin position="1675"/>
        <end position="1692"/>
    </location>
    <ligand>
        <name>NADP(+)</name>
        <dbReference type="ChEBI" id="CHEBI:58349"/>
        <label>1</label>
        <note>for enoyl reductase activity</note>
    </ligand>
</feature>
<feature type="binding site">
    <location>
        <begin position="1889"/>
        <end position="1904"/>
    </location>
    <ligand>
        <name>NADP(+)</name>
        <dbReference type="ChEBI" id="CHEBI:58349"/>
        <label>2</label>
        <note>for ketoreductase activity</note>
    </ligand>
</feature>
<feature type="modified residue" description="N-acetylglutamate" evidence="12">
    <location>
        <position position="2"/>
    </location>
</feature>
<feature type="modified residue" description="S-nitrosocysteine" evidence="3">
    <location>
        <position position="1475"/>
    </location>
</feature>
<feature type="modified residue" description="N6-(pyridoxal phosphate)lysine" evidence="1">
    <location>
        <position position="1708"/>
    </location>
</feature>
<feature type="modified residue" description="S-nitrosocysteine" evidence="3">
    <location>
        <position position="2093"/>
    </location>
</feature>
<feature type="modified residue" description="O-(pantetheine 4'-phosphoryl)serine" evidence="4">
    <location>
        <position position="2158"/>
    </location>
</feature>
<feature type="splice variant" id="VSP_000149" description="In isoform 1." evidence="13">
    <original>T</original>
    <variation>TQCFSFSLF</variation>
    <location>
        <position position="2349"/>
    </location>
</feature>
<feature type="sequence conflict" description="In Ref. 2; AAA48767." evidence="13" ref="2">
    <original>QL</original>
    <variation>PV</variation>
    <location>
        <begin position="78"/>
        <end position="79"/>
    </location>
</feature>
<feature type="sequence conflict" description="In Ref. 2; AAA48767." evidence="13" ref="2">
    <original>L</original>
    <variation>A</variation>
    <location>
        <position position="117"/>
    </location>
</feature>
<feature type="sequence conflict" description="In Ref. 2; AAA48767." evidence="13" ref="2">
    <original>R</original>
    <variation>S</variation>
    <location>
        <position position="676"/>
    </location>
</feature>
<feature type="sequence conflict" description="In Ref. 2; AAA48767." evidence="13" ref="2">
    <original>K</original>
    <variation>N</variation>
    <location>
        <position position="1170"/>
    </location>
</feature>
<feature type="sequence conflict" description="In Ref. 2; AAA48767." evidence="13" ref="2">
    <original>A</original>
    <variation>T</variation>
    <location>
        <position position="1179"/>
    </location>
</feature>
<feature type="sequence conflict" description="In Ref. 2; AAA48767." evidence="13" ref="2">
    <original>R</original>
    <variation>H</variation>
    <location>
        <position position="1192"/>
    </location>
</feature>
<feature type="sequence conflict" description="In Ref. 2; AAA48767." evidence="13" ref="2">
    <original>P</original>
    <variation>L</variation>
    <location>
        <position position="1199"/>
    </location>
</feature>
<feature type="sequence conflict" description="In Ref. 2; AAA48767." evidence="13" ref="2">
    <original>DN</original>
    <variation>ND</variation>
    <location>
        <begin position="1287"/>
        <end position="1288"/>
    </location>
</feature>
<feature type="sequence conflict" description="In Ref. 2; AAA48767." evidence="13" ref="2">
    <original>K</original>
    <variation>E</variation>
    <location>
        <position position="1373"/>
    </location>
</feature>
<feature type="sequence conflict" description="In Ref. 2; AAA48767." evidence="13" ref="2">
    <original>C</original>
    <variation>Y</variation>
    <location>
        <position position="1534"/>
    </location>
</feature>
<feature type="sequence conflict" description="In Ref. 2; AAA48767." evidence="13" ref="2">
    <original>W</original>
    <variation>R</variation>
    <location>
        <position position="1578"/>
    </location>
</feature>
<feature type="sequence conflict" description="In Ref. 2; AAA48767." evidence="13" ref="2">
    <original>QAAIAIALSMGC</original>
    <variation>ASSHCHRLEHGLA</variation>
    <location>
        <begin position="1686"/>
        <end position="1697"/>
    </location>
</feature>
<feature type="sequence conflict" description="In Ref. 2; AAA48767." evidence="13" ref="2">
    <original>Q</original>
    <variation>E</variation>
    <location>
        <position position="1733"/>
    </location>
</feature>
<feature type="sequence conflict" description="In Ref. 2; AAA48767." evidence="13" ref="2">
    <original>S</original>
    <variation>N</variation>
    <location>
        <position position="1746"/>
    </location>
</feature>
<evidence type="ECO:0000250" key="1"/>
<evidence type="ECO:0000250" key="2">
    <source>
        <dbReference type="UniProtKB" id="P19096"/>
    </source>
</evidence>
<evidence type="ECO:0000250" key="3">
    <source>
        <dbReference type="UniProtKB" id="P49327"/>
    </source>
</evidence>
<evidence type="ECO:0000255" key="4">
    <source>
        <dbReference type="PROSITE-ProRule" id="PRU00258"/>
    </source>
</evidence>
<evidence type="ECO:0000255" key="5">
    <source>
        <dbReference type="PROSITE-ProRule" id="PRU01348"/>
    </source>
</evidence>
<evidence type="ECO:0000255" key="6">
    <source>
        <dbReference type="PROSITE-ProRule" id="PRU01363"/>
    </source>
</evidence>
<evidence type="ECO:0000255" key="7">
    <source>
        <dbReference type="PROSITE-ProRule" id="PRU10022"/>
    </source>
</evidence>
<evidence type="ECO:0000269" key="8">
    <source>
    </source>
</evidence>
<evidence type="ECO:0000269" key="9">
    <source>
    </source>
</evidence>
<evidence type="ECO:0000269" key="10">
    <source>
    </source>
</evidence>
<evidence type="ECO:0000269" key="11">
    <source>
    </source>
</evidence>
<evidence type="ECO:0000269" key="12">
    <source>
    </source>
</evidence>
<evidence type="ECO:0000305" key="13"/>
<evidence type="ECO:0000305" key="14">
    <source>
    </source>
</evidence>
<evidence type="ECO:0000305" key="15">
    <source>
    </source>
</evidence>
<evidence type="ECO:0000305" key="16">
    <source>
    </source>
</evidence>
<evidence type="ECO:0000305" key="17">
    <source>
    </source>
</evidence>
<evidence type="ECO:0000305" key="18">
    <source>
    </source>
</evidence>
<name>FAS_CHICK</name>
<reference key="1">
    <citation type="journal article" date="1994" name="Arch. Biochem. Biophys.">
        <title>Amino-terminal blocking group and sequence of the animal fatty acid synthase.</title>
        <authorList>
            <person name="Huang W.-Y."/>
            <person name="Chirala S.S."/>
            <person name="Wakil S.J."/>
        </authorList>
    </citation>
    <scope>NUCLEOTIDE SEQUENCE [MRNA]</scope>
    <scope>PROTEIN SEQUENCE OF 2-12</scope>
    <scope>ACETYLATION AT GLU-2</scope>
    <source>
        <strain>White leghorn</strain>
        <tissue>Liver</tissue>
    </source>
</reference>
<reference key="2">
    <citation type="journal article" date="1989" name="Proc. Natl. Acad. Sci. U.S.A.">
        <title>Molecular cloning and sequencing of chicken liver fatty acid synthase cDNA.</title>
        <authorList>
            <person name="Holzer K.P."/>
            <person name="Liu W."/>
            <person name="Hammes G.G."/>
        </authorList>
    </citation>
    <scope>NUCLEOTIDE SEQUENCE [MRNA] OF 75-1775</scope>
    <source>
        <tissue>Liver</tissue>
    </source>
</reference>
<reference key="3">
    <citation type="journal article" date="1989" name="J. Biol. Chem.">
        <title>A novel cDNA extension procedure. Isolation of chicken fatty acid synthase cDNA clones.</title>
        <authorList>
            <person name="Chirala S.S."/>
            <person name="Kasturi R."/>
            <person name="Pazirandeh M."/>
            <person name="Stolow D.T."/>
            <person name="Huang W.-Y."/>
            <person name="Wakil S.J."/>
        </authorList>
    </citation>
    <scope>NUCLEOTIDE SEQUENCE [MRNA] OF 1568-2512</scope>
    <scope>PARTIAL PROTEIN SEQUENCE</scope>
</reference>
<reference key="4">
    <citation type="journal article" date="1988" name="Proc. Natl. Acad. Sci. U.S.A.">
        <title>Molecular cloning and sequencing of DNA complementary to chicken liver fatty acid synthase mRNA.</title>
        <authorList>
            <person name="Yuan Z."/>
            <person name="Liu W."/>
            <person name="Hammes G.G."/>
        </authorList>
    </citation>
    <scope>NUCLEOTIDE SEQUENCE [MRNA] OF 1752-2512</scope>
</reference>
<reference key="5">
    <citation type="journal article" date="1988" name="Biochemistry">
        <title>Characterization of a genomic and cDNA clone coding for the thioesterase domain and 3' noncoding region of the chicken liver fatty acid synthase gene.</title>
        <authorList>
            <person name="Kasturi R."/>
            <person name="Chirala S.S."/>
            <person name="Pazirandeh M."/>
            <person name="Wakil S.J."/>
        </authorList>
    </citation>
    <scope>NUCLEOTIDE SEQUENCE [GENOMIC DNA / MRNA] OF 2202-2512</scope>
</reference>
<reference key="6">
    <citation type="journal article" date="1989" name="Arch. Biochem. Biophys.">
        <title>Complete amino acid sequence of chicken liver acyl carrier protein derived from the fatty acid synthase.</title>
        <authorList>
            <person name="Huang W.-Y."/>
            <person name="Stoops J.K."/>
            <person name="Wakil S.J."/>
        </authorList>
    </citation>
    <scope>PROTEIN SEQUENCE OF 2122-2210</scope>
</reference>
<reference key="7">
    <citation type="journal article" date="1988" name="Biochemistry">
        <title>Complete amino acid sequence of the thioesterase domain of chicken liver fatty acid synthase.</title>
        <authorList>
            <person name="Yang C.-Y."/>
            <person name="Huang W.-Y."/>
            <person name="Chirala S.S."/>
            <person name="Wakil S.J."/>
        </authorList>
    </citation>
    <scope>PROTEIN SEQUENCE OF 2210-2509</scope>
    <source>
        <strain>White leghorn</strain>
    </source>
</reference>
<reference key="8">
    <citation type="journal article" date="1989" name="Biochemistry">
        <title>Amino acid sequences of pyridoxal 5'-phosphate binding sites and fluorescence resonance energy transfer in chicken liver fatty acid synthase.</title>
        <authorList>
            <person name="Chang S.I."/>
            <person name="Hammes G.G."/>
        </authorList>
    </citation>
    <scope>PROTEIN SEQUENCE OF 668-675 AND 1699-1710</scope>
</reference>
<reference key="9">
    <citation type="journal article" date="1983" name="J. Biol. Chem.">
        <title>The architecture of the animal fatty acid synthetase. II. Separation of the core and thioesterase functions and determination of the N-C orientation of the subunit.</title>
        <authorList>
            <person name="Mattick J.S."/>
            <person name="Nickless J."/>
            <person name="Mizugaki M."/>
            <person name="Yang C.Y."/>
            <person name="Uchiyama S."/>
            <person name="Wakil S.J."/>
        </authorList>
    </citation>
    <scope>FUNCTION</scope>
    <scope>CATALYTIC ACTIVITY</scope>
    <scope>PATHWAY</scope>
</reference>
<reference key="10">
    <citation type="journal article" date="1983" name="J. Biol. Chem.">
        <title>The architecture of the animal fatty acid synthetase. III. Isolation and characterization of beta-ketoacyl reductase.</title>
        <authorList>
            <person name="Wong H."/>
            <person name="Mattick J.S."/>
            <person name="Wakil S.J."/>
        </authorList>
    </citation>
    <scope>FUNCTION</scope>
    <scope>CATALYTIC ACTIVITY</scope>
    <scope>PATHWAY</scope>
</reference>
<reference key="11">
    <citation type="journal article" date="1983" name="J. Biol. Chem.">
        <title>The architecture of the animal fatty acid synthetase complex. IV. Mapping of active centers and model for the mechanism of action.</title>
        <authorList>
            <person name="Tsukamoto Y."/>
            <person name="Wong H."/>
            <person name="Mattick J.S."/>
            <person name="Wakil S.J."/>
        </authorList>
    </citation>
    <scope>FUNCTION</scope>
    <scope>CATALYTIC ACTIVITY</scope>
    <scope>ACTIVITY REGULATION</scope>
    <scope>PATHWAY</scope>
</reference>
<reference key="12">
    <citation type="journal article" date="1988" name="J. Biol. Chem.">
        <title>Isolation and mapping of the beta-hydroxyacyl dehydratase activity of chicken liver fatty acid synthase.</title>
        <authorList>
            <person name="Tsukamoto Y."/>
            <person name="Wakil S.J."/>
        </authorList>
    </citation>
    <scope>FUNCTION</scope>
    <scope>CATALYTIC ACTIVITY</scope>
    <scope>PATHWAY</scope>
</reference>
<reference key="13">
    <citation type="journal article" date="1989" name="J. Biol. Chem.">
        <title>Characterization of recombinant thioesterase and acyl carrier protein domains of chicken fatty acid synthase expressed in Escherichia coli.</title>
        <authorList>
            <person name="Pazirandeh M."/>
            <person name="Chirala S.S."/>
            <person name="Huang W.Y."/>
            <person name="Wakil S.J."/>
        </authorList>
    </citation>
    <scope>FUNCTION</scope>
    <scope>CATALYTIC ACTIVITY</scope>
</reference>
<reference key="14">
    <citation type="journal article" date="1991" name="J. Biol. Chem.">
        <title>Site-directed mutagenesis studies on the recombinant thioesterase domain of chicken fatty acid synthase expressed in Escherichia coli.</title>
        <authorList>
            <person name="Pazirandeh M."/>
            <person name="Chirala S.S."/>
            <person name="Wakil S.J."/>
        </authorList>
    </citation>
    <scope>FUNCTION</scope>
    <scope>CATALYTIC ACTIVITY</scope>
</reference>
<organism>
    <name type="scientific">Gallus gallus</name>
    <name type="common">Chicken</name>
    <dbReference type="NCBI Taxonomy" id="9031"/>
    <lineage>
        <taxon>Eukaryota</taxon>
        <taxon>Metazoa</taxon>
        <taxon>Chordata</taxon>
        <taxon>Craniata</taxon>
        <taxon>Vertebrata</taxon>
        <taxon>Euteleostomi</taxon>
        <taxon>Archelosauria</taxon>
        <taxon>Archosauria</taxon>
        <taxon>Dinosauria</taxon>
        <taxon>Saurischia</taxon>
        <taxon>Theropoda</taxon>
        <taxon>Coelurosauria</taxon>
        <taxon>Aves</taxon>
        <taxon>Neognathae</taxon>
        <taxon>Galloanserae</taxon>
        <taxon>Galliformes</taxon>
        <taxon>Phasianidae</taxon>
        <taxon>Phasianinae</taxon>
        <taxon>Gallus</taxon>
    </lineage>
</organism>
<dbReference type="EC" id="2.3.1.85" evidence="8 9 10 11"/>
<dbReference type="EC" id="2.3.1.38" evidence="10 11"/>
<dbReference type="EC" id="2.3.1.39" evidence="10 11"/>
<dbReference type="EC" id="2.3.1.41" evidence="18"/>
<dbReference type="EC" id="1.1.1.100" evidence="16 17 18"/>
<dbReference type="EC" id="4.2.1.59" evidence="16 18"/>
<dbReference type="EC" id="1.3.1.39" evidence="18"/>
<dbReference type="EC" id="3.1.2.14" evidence="14 15 18"/>
<dbReference type="EMBL" id="J03860">
    <property type="protein sequence ID" value="AAA48767.1"/>
    <property type="molecule type" value="mRNA"/>
</dbReference>
<dbReference type="EMBL" id="J04485">
    <property type="protein sequence ID" value="AAB46389.1"/>
    <property type="molecule type" value="mRNA"/>
</dbReference>
<dbReference type="EMBL" id="J02839">
    <property type="protein sequence ID" value="AAA82106.1"/>
    <property type="status" value="ALT_FRAME"/>
    <property type="molecule type" value="Genomic_DNA"/>
</dbReference>
<dbReference type="PIR" id="S57248">
    <property type="entry name" value="XYCHFA"/>
</dbReference>
<dbReference type="SMR" id="P12276"/>
<dbReference type="FunCoup" id="P12276">
    <property type="interactions" value="1351"/>
</dbReference>
<dbReference type="STRING" id="9031.ENSGALP00000048384"/>
<dbReference type="BindingDB" id="P12276"/>
<dbReference type="ChEMBL" id="CHEMBL1795136"/>
<dbReference type="ESTHER" id="chick-fas">
    <property type="family name" value="Thioesterase"/>
</dbReference>
<dbReference type="GlyGen" id="P12276">
    <property type="glycosylation" value="1 site"/>
</dbReference>
<dbReference type="iPTMnet" id="P12276"/>
<dbReference type="PaxDb" id="9031-ENSGALP00000004327"/>
<dbReference type="VEuPathDB" id="HostDB:geneid_396061"/>
<dbReference type="eggNOG" id="KOG1202">
    <property type="taxonomic scope" value="Eukaryota"/>
</dbReference>
<dbReference type="eggNOG" id="KOG2335">
    <property type="taxonomic scope" value="Eukaryota"/>
</dbReference>
<dbReference type="InParanoid" id="P12276"/>
<dbReference type="OrthoDB" id="329835at2759"/>
<dbReference type="PhylomeDB" id="P12276"/>
<dbReference type="SABIO-RK" id="P12276"/>
<dbReference type="UniPathway" id="UPA00094"/>
<dbReference type="PRO" id="PR:P12276"/>
<dbReference type="Proteomes" id="UP000000539">
    <property type="component" value="Unassembled WGS sequence"/>
</dbReference>
<dbReference type="GO" id="GO:0005737">
    <property type="term" value="C:cytoplasm"/>
    <property type="evidence" value="ECO:0000318"/>
    <property type="project" value="GO_Central"/>
</dbReference>
<dbReference type="GO" id="GO:0019171">
    <property type="term" value="F:(3R)-hydroxyacyl-[acyl-carrier-protein] dehydratase activity"/>
    <property type="evidence" value="ECO:0007669"/>
    <property type="project" value="UniProtKB-EC"/>
</dbReference>
<dbReference type="GO" id="GO:0004316">
    <property type="term" value="F:3-oxoacyl-[acyl-carrier-protein] reductase (NADPH) activity"/>
    <property type="evidence" value="ECO:0007669"/>
    <property type="project" value="UniProtKB-EC"/>
</dbReference>
<dbReference type="GO" id="GO:0004315">
    <property type="term" value="F:3-oxoacyl-[acyl-carrier-protein] synthase activity"/>
    <property type="evidence" value="ECO:0007669"/>
    <property type="project" value="UniProtKB-EC"/>
</dbReference>
<dbReference type="GO" id="GO:0004313">
    <property type="term" value="F:[acyl-carrier-protein] S-acetyltransferase activity"/>
    <property type="evidence" value="ECO:0007669"/>
    <property type="project" value="UniProtKB-EC"/>
</dbReference>
<dbReference type="GO" id="GO:0004314">
    <property type="term" value="F:[acyl-carrier-protein] S-malonyltransferase activity"/>
    <property type="evidence" value="ECO:0007669"/>
    <property type="project" value="UniProtKB-EC"/>
</dbReference>
<dbReference type="GO" id="GO:0141148">
    <property type="term" value="F:enoyl-[acyl-carrier-protein] reductase (NADPH) activity"/>
    <property type="evidence" value="ECO:0007669"/>
    <property type="project" value="UniProtKB-EC"/>
</dbReference>
<dbReference type="GO" id="GO:0004312">
    <property type="term" value="F:fatty acid synthase activity"/>
    <property type="evidence" value="ECO:0000318"/>
    <property type="project" value="GO_Central"/>
</dbReference>
<dbReference type="GO" id="GO:0016297">
    <property type="term" value="F:fatty acyl-[ACP] hydrolase activity"/>
    <property type="evidence" value="ECO:0007669"/>
    <property type="project" value="UniProtKB-EC"/>
</dbReference>
<dbReference type="GO" id="GO:0031177">
    <property type="term" value="F:phosphopantetheine binding"/>
    <property type="evidence" value="ECO:0007669"/>
    <property type="project" value="InterPro"/>
</dbReference>
<dbReference type="GO" id="GO:0003697">
    <property type="term" value="F:single-stranded DNA binding"/>
    <property type="evidence" value="ECO:0000314"/>
    <property type="project" value="AgBase"/>
</dbReference>
<dbReference type="GO" id="GO:0006633">
    <property type="term" value="P:fatty acid biosynthetic process"/>
    <property type="evidence" value="ECO:0000318"/>
    <property type="project" value="GO_Central"/>
</dbReference>
<dbReference type="GO" id="GO:0006089">
    <property type="term" value="P:lactate metabolic process"/>
    <property type="evidence" value="ECO:0000315"/>
    <property type="project" value="AgBase"/>
</dbReference>
<dbReference type="GO" id="GO:0032100">
    <property type="term" value="P:positive regulation of appetite"/>
    <property type="evidence" value="ECO:0000315"/>
    <property type="project" value="AgBase"/>
</dbReference>
<dbReference type="CDD" id="cd05195">
    <property type="entry name" value="enoyl_red"/>
    <property type="match status" value="1"/>
</dbReference>
<dbReference type="CDD" id="cd08954">
    <property type="entry name" value="KR_1_FAS_SDR_x"/>
    <property type="match status" value="2"/>
</dbReference>
<dbReference type="CDD" id="cd00833">
    <property type="entry name" value="PKS"/>
    <property type="match status" value="1"/>
</dbReference>
<dbReference type="FunFam" id="1.10.1200.10:FF:000013">
    <property type="entry name" value="Fatty acid synthase"/>
    <property type="match status" value="1"/>
</dbReference>
<dbReference type="FunFam" id="3.10.129.110:FF:000002">
    <property type="entry name" value="Fatty acid synthase"/>
    <property type="match status" value="1"/>
</dbReference>
<dbReference type="FunFam" id="3.40.366.10:FF:000005">
    <property type="entry name" value="Fatty acid synthase"/>
    <property type="match status" value="1"/>
</dbReference>
<dbReference type="FunFam" id="3.40.47.10:FF:000033">
    <property type="entry name" value="Fatty acid synthase"/>
    <property type="match status" value="1"/>
</dbReference>
<dbReference type="FunFam" id="3.40.50.150:FF:000186">
    <property type="entry name" value="Fatty acid synthase"/>
    <property type="match status" value="1"/>
</dbReference>
<dbReference type="FunFam" id="3.40.50.1820:FF:000059">
    <property type="entry name" value="Fatty acid synthase"/>
    <property type="match status" value="1"/>
</dbReference>
<dbReference type="FunFam" id="3.40.50.1820:FF:000105">
    <property type="entry name" value="Fatty acid synthase"/>
    <property type="match status" value="1"/>
</dbReference>
<dbReference type="FunFam" id="3.40.50.720:FF:000249">
    <property type="entry name" value="Fatty acid synthase"/>
    <property type="match status" value="1"/>
</dbReference>
<dbReference type="FunFam" id="3.90.180.10:FF:000015">
    <property type="entry name" value="Fatty acid synthase"/>
    <property type="match status" value="1"/>
</dbReference>
<dbReference type="FunFam" id="3.40.50.720:FF:000209">
    <property type="entry name" value="Polyketide synthase Pks12"/>
    <property type="match status" value="1"/>
</dbReference>
<dbReference type="Gene3D" id="3.30.70.3290">
    <property type="match status" value="1"/>
</dbReference>
<dbReference type="Gene3D" id="3.40.47.10">
    <property type="match status" value="1"/>
</dbReference>
<dbReference type="Gene3D" id="1.10.1200.10">
    <property type="entry name" value="ACP-like"/>
    <property type="match status" value="1"/>
</dbReference>
<dbReference type="Gene3D" id="3.40.50.1820">
    <property type="entry name" value="alpha/beta hydrolase"/>
    <property type="match status" value="2"/>
</dbReference>
<dbReference type="Gene3D" id="3.40.366.10">
    <property type="entry name" value="Malonyl-Coenzyme A Acyl Carrier Protein, domain 2"/>
    <property type="match status" value="1"/>
</dbReference>
<dbReference type="Gene3D" id="3.90.180.10">
    <property type="entry name" value="Medium-chain alcohol dehydrogenases, catalytic domain"/>
    <property type="match status" value="1"/>
</dbReference>
<dbReference type="Gene3D" id="3.40.50.720">
    <property type="entry name" value="NAD(P)-binding Rossmann-like Domain"/>
    <property type="match status" value="1"/>
</dbReference>
<dbReference type="Gene3D" id="3.10.129.110">
    <property type="entry name" value="Polyketide synthase dehydratase"/>
    <property type="match status" value="1"/>
</dbReference>
<dbReference type="Gene3D" id="3.40.50.150">
    <property type="entry name" value="Vaccinia Virus protein VP39"/>
    <property type="match status" value="1"/>
</dbReference>
<dbReference type="InterPro" id="IPR029058">
    <property type="entry name" value="AB_hydrolase_fold"/>
</dbReference>
<dbReference type="InterPro" id="IPR001227">
    <property type="entry name" value="Ac_transferase_dom_sf"/>
</dbReference>
<dbReference type="InterPro" id="IPR036736">
    <property type="entry name" value="ACP-like_sf"/>
</dbReference>
<dbReference type="InterPro" id="IPR014043">
    <property type="entry name" value="Acyl_transferase_dom"/>
</dbReference>
<dbReference type="InterPro" id="IPR016035">
    <property type="entry name" value="Acyl_Trfase/lysoPLipase"/>
</dbReference>
<dbReference type="InterPro" id="IPR013149">
    <property type="entry name" value="ADH-like_C"/>
</dbReference>
<dbReference type="InterPro" id="IPR049391">
    <property type="entry name" value="FAS_pseudo-KR"/>
</dbReference>
<dbReference type="InterPro" id="IPR011032">
    <property type="entry name" value="GroES-like_sf"/>
</dbReference>
<dbReference type="InterPro" id="IPR018201">
    <property type="entry name" value="Ketoacyl_synth_AS"/>
</dbReference>
<dbReference type="InterPro" id="IPR014031">
    <property type="entry name" value="Ketoacyl_synth_C"/>
</dbReference>
<dbReference type="InterPro" id="IPR014030">
    <property type="entry name" value="Ketoacyl_synth_N"/>
</dbReference>
<dbReference type="InterPro" id="IPR016036">
    <property type="entry name" value="Malonyl_transacylase_ACP-bd"/>
</dbReference>
<dbReference type="InterPro" id="IPR036291">
    <property type="entry name" value="NAD(P)-bd_dom_sf"/>
</dbReference>
<dbReference type="InterPro" id="IPR032821">
    <property type="entry name" value="PKS_assoc"/>
</dbReference>
<dbReference type="InterPro" id="IPR020841">
    <property type="entry name" value="PKS_Beta-ketoAc_synthase_dom"/>
</dbReference>
<dbReference type="InterPro" id="IPR042104">
    <property type="entry name" value="PKS_dehydratase_sf"/>
</dbReference>
<dbReference type="InterPro" id="IPR020807">
    <property type="entry name" value="PKS_DH"/>
</dbReference>
<dbReference type="InterPro" id="IPR049552">
    <property type="entry name" value="PKS_DH_N"/>
</dbReference>
<dbReference type="InterPro" id="IPR020843">
    <property type="entry name" value="PKS_ER"/>
</dbReference>
<dbReference type="InterPro" id="IPR013968">
    <property type="entry name" value="PKS_KR"/>
</dbReference>
<dbReference type="InterPro" id="IPR049900">
    <property type="entry name" value="PKS_mFAS_DH"/>
</dbReference>
<dbReference type="InterPro" id="IPR050091">
    <property type="entry name" value="PKS_NRPS_Biosynth_Enz"/>
</dbReference>
<dbReference type="InterPro" id="IPR020806">
    <property type="entry name" value="PKS_PP-bd"/>
</dbReference>
<dbReference type="InterPro" id="IPR009081">
    <property type="entry name" value="PP-bd_ACP"/>
</dbReference>
<dbReference type="InterPro" id="IPR006162">
    <property type="entry name" value="Ppantetheine_attach_site"/>
</dbReference>
<dbReference type="InterPro" id="IPR029063">
    <property type="entry name" value="SAM-dependent_MTases_sf"/>
</dbReference>
<dbReference type="InterPro" id="IPR001031">
    <property type="entry name" value="Thioesterase"/>
</dbReference>
<dbReference type="InterPro" id="IPR016039">
    <property type="entry name" value="Thiolase-like"/>
</dbReference>
<dbReference type="PANTHER" id="PTHR43775">
    <property type="entry name" value="FATTY ACID SYNTHASE"/>
    <property type="match status" value="1"/>
</dbReference>
<dbReference type="PANTHER" id="PTHR43775:SF7">
    <property type="entry name" value="FATTY ACID SYNTHASE"/>
    <property type="match status" value="1"/>
</dbReference>
<dbReference type="Pfam" id="PF00698">
    <property type="entry name" value="Acyl_transf_1"/>
    <property type="match status" value="1"/>
</dbReference>
<dbReference type="Pfam" id="PF00107">
    <property type="entry name" value="ADH_zinc_N"/>
    <property type="match status" value="1"/>
</dbReference>
<dbReference type="Pfam" id="PF21149">
    <property type="entry name" value="FAS_pseudo-KR"/>
    <property type="match status" value="1"/>
</dbReference>
<dbReference type="Pfam" id="PF16197">
    <property type="entry name" value="KAsynt_C_assoc"/>
    <property type="match status" value="1"/>
</dbReference>
<dbReference type="Pfam" id="PF00109">
    <property type="entry name" value="ketoacyl-synt"/>
    <property type="match status" value="1"/>
</dbReference>
<dbReference type="Pfam" id="PF02801">
    <property type="entry name" value="Ketoacyl-synt_C"/>
    <property type="match status" value="1"/>
</dbReference>
<dbReference type="Pfam" id="PF08659">
    <property type="entry name" value="KR"/>
    <property type="match status" value="1"/>
</dbReference>
<dbReference type="Pfam" id="PF21089">
    <property type="entry name" value="PKS_DH_N"/>
    <property type="match status" value="1"/>
</dbReference>
<dbReference type="Pfam" id="PF00550">
    <property type="entry name" value="PP-binding"/>
    <property type="match status" value="1"/>
</dbReference>
<dbReference type="Pfam" id="PF00975">
    <property type="entry name" value="Thioesterase"/>
    <property type="match status" value="1"/>
</dbReference>
<dbReference type="SMART" id="SM00827">
    <property type="entry name" value="PKS_AT"/>
    <property type="match status" value="1"/>
</dbReference>
<dbReference type="SMART" id="SM00826">
    <property type="entry name" value="PKS_DH"/>
    <property type="match status" value="1"/>
</dbReference>
<dbReference type="SMART" id="SM00829">
    <property type="entry name" value="PKS_ER"/>
    <property type="match status" value="1"/>
</dbReference>
<dbReference type="SMART" id="SM00822">
    <property type="entry name" value="PKS_KR"/>
    <property type="match status" value="1"/>
</dbReference>
<dbReference type="SMART" id="SM00825">
    <property type="entry name" value="PKS_KS"/>
    <property type="match status" value="1"/>
</dbReference>
<dbReference type="SMART" id="SM00823">
    <property type="entry name" value="PKS_PP"/>
    <property type="match status" value="1"/>
</dbReference>
<dbReference type="SUPFAM" id="SSF47336">
    <property type="entry name" value="ACP-like"/>
    <property type="match status" value="1"/>
</dbReference>
<dbReference type="SUPFAM" id="SSF53474">
    <property type="entry name" value="alpha/beta-Hydrolases"/>
    <property type="match status" value="1"/>
</dbReference>
<dbReference type="SUPFAM" id="SSF52151">
    <property type="entry name" value="FabD/lysophospholipase-like"/>
    <property type="match status" value="1"/>
</dbReference>
<dbReference type="SUPFAM" id="SSF50129">
    <property type="entry name" value="GroES-like"/>
    <property type="match status" value="1"/>
</dbReference>
<dbReference type="SUPFAM" id="SSF51735">
    <property type="entry name" value="NAD(P)-binding Rossmann-fold domains"/>
    <property type="match status" value="2"/>
</dbReference>
<dbReference type="SUPFAM" id="SSF55048">
    <property type="entry name" value="Probable ACP-binding domain of malonyl-CoA ACP transacylase"/>
    <property type="match status" value="1"/>
</dbReference>
<dbReference type="SUPFAM" id="SSF53335">
    <property type="entry name" value="S-adenosyl-L-methionine-dependent methyltransferases"/>
    <property type="match status" value="1"/>
</dbReference>
<dbReference type="SUPFAM" id="SSF53901">
    <property type="entry name" value="Thiolase-like"/>
    <property type="match status" value="1"/>
</dbReference>
<dbReference type="PROSITE" id="PS50075">
    <property type="entry name" value="CARRIER"/>
    <property type="match status" value="1"/>
</dbReference>
<dbReference type="PROSITE" id="PS00606">
    <property type="entry name" value="KS3_1"/>
    <property type="match status" value="1"/>
</dbReference>
<dbReference type="PROSITE" id="PS52004">
    <property type="entry name" value="KS3_2"/>
    <property type="match status" value="1"/>
</dbReference>
<dbReference type="PROSITE" id="PS00012">
    <property type="entry name" value="PHOSPHOPANTETHEINE"/>
    <property type="match status" value="1"/>
</dbReference>
<dbReference type="PROSITE" id="PS52019">
    <property type="entry name" value="PKS_MFAS_DH"/>
    <property type="match status" value="1"/>
</dbReference>
<comment type="function">
    <text evidence="8 9 10 11">Fatty acid synthetase is a multifunctional enzyme that catalyzes the de novo biosynthesis of long-chain saturated fatty acids starting from acetyl-CoA and malonyl-CoA in the presence of NADPH. This multifunctional protein contains 7 catalytic activities and a site for the binding of the prosthetic group 4'-phosphopantetheine of the acyl carrier protein ([ACP]) domain.</text>
</comment>
<comment type="catalytic activity">
    <reaction evidence="8 9 10 11">
        <text>acetyl-CoA + n malonyl-CoA + 2n NADPH + 2n H(+) = a long-chain fatty acid + (n+1) CoA + n CO2 + 2n NADP(+).</text>
        <dbReference type="EC" id="2.3.1.85"/>
    </reaction>
</comment>
<comment type="catalytic activity">
    <reaction evidence="10 11">
        <text>holo-[ACP] + acetyl-CoA = acetyl-[ACP] + CoA</text>
        <dbReference type="Rhea" id="RHEA:41788"/>
        <dbReference type="Rhea" id="RHEA-COMP:9621"/>
        <dbReference type="Rhea" id="RHEA-COMP:9685"/>
        <dbReference type="ChEBI" id="CHEBI:57287"/>
        <dbReference type="ChEBI" id="CHEBI:57288"/>
        <dbReference type="ChEBI" id="CHEBI:64479"/>
        <dbReference type="ChEBI" id="CHEBI:78446"/>
        <dbReference type="EC" id="2.3.1.38"/>
    </reaction>
    <physiologicalReaction direction="left-to-right" evidence="10 11">
        <dbReference type="Rhea" id="RHEA:41789"/>
    </physiologicalReaction>
</comment>
<comment type="catalytic activity">
    <reaction evidence="10 11">
        <text>holo-[ACP] + malonyl-CoA = malonyl-[ACP] + CoA</text>
        <dbReference type="Rhea" id="RHEA:41792"/>
        <dbReference type="Rhea" id="RHEA-COMP:9623"/>
        <dbReference type="Rhea" id="RHEA-COMP:9685"/>
        <dbReference type="ChEBI" id="CHEBI:57287"/>
        <dbReference type="ChEBI" id="CHEBI:57384"/>
        <dbReference type="ChEBI" id="CHEBI:64479"/>
        <dbReference type="ChEBI" id="CHEBI:78449"/>
        <dbReference type="EC" id="2.3.1.39"/>
    </reaction>
    <physiologicalReaction direction="left-to-right" evidence="10 11">
        <dbReference type="Rhea" id="RHEA:41793"/>
    </physiologicalReaction>
</comment>
<comment type="catalytic activity">
    <reaction evidence="18">
        <text>a fatty acyl-[ACP] + malonyl-[ACP] + H(+) = a 3-oxoacyl-[ACP] + holo-[ACP] + CO2</text>
        <dbReference type="Rhea" id="RHEA:22836"/>
        <dbReference type="Rhea" id="RHEA-COMP:9623"/>
        <dbReference type="Rhea" id="RHEA-COMP:9685"/>
        <dbReference type="Rhea" id="RHEA-COMP:9916"/>
        <dbReference type="Rhea" id="RHEA-COMP:14125"/>
        <dbReference type="ChEBI" id="CHEBI:15378"/>
        <dbReference type="ChEBI" id="CHEBI:16526"/>
        <dbReference type="ChEBI" id="CHEBI:64479"/>
        <dbReference type="ChEBI" id="CHEBI:78449"/>
        <dbReference type="ChEBI" id="CHEBI:78776"/>
        <dbReference type="ChEBI" id="CHEBI:138651"/>
        <dbReference type="EC" id="2.3.1.41"/>
    </reaction>
    <physiologicalReaction direction="left-to-right" evidence="18">
        <dbReference type="Rhea" id="RHEA:22837"/>
    </physiologicalReaction>
</comment>
<comment type="catalytic activity">
    <reaction evidence="16 17 18">
        <text>a (3R)-hydroxyacyl-[ACP] + NADP(+) = a 3-oxoacyl-[ACP] + NADPH + H(+)</text>
        <dbReference type="Rhea" id="RHEA:17397"/>
        <dbReference type="Rhea" id="RHEA-COMP:9916"/>
        <dbReference type="Rhea" id="RHEA-COMP:9945"/>
        <dbReference type="ChEBI" id="CHEBI:15378"/>
        <dbReference type="ChEBI" id="CHEBI:57783"/>
        <dbReference type="ChEBI" id="CHEBI:58349"/>
        <dbReference type="ChEBI" id="CHEBI:78776"/>
        <dbReference type="ChEBI" id="CHEBI:78827"/>
        <dbReference type="EC" id="1.1.1.100"/>
    </reaction>
    <physiologicalReaction direction="right-to-left" evidence="16 17 18">
        <dbReference type="Rhea" id="RHEA:17399"/>
    </physiologicalReaction>
</comment>
<comment type="catalytic activity">
    <reaction evidence="16 18">
        <text>a (3R)-hydroxyacyl-[ACP] = a (2E)-enoyl-[ACP] + H2O</text>
        <dbReference type="Rhea" id="RHEA:13097"/>
        <dbReference type="Rhea" id="RHEA-COMP:9925"/>
        <dbReference type="Rhea" id="RHEA-COMP:9945"/>
        <dbReference type="ChEBI" id="CHEBI:15377"/>
        <dbReference type="ChEBI" id="CHEBI:78784"/>
        <dbReference type="ChEBI" id="CHEBI:78827"/>
        <dbReference type="EC" id="4.2.1.59"/>
    </reaction>
    <physiologicalReaction direction="left-to-right" evidence="16 18">
        <dbReference type="Rhea" id="RHEA:13098"/>
    </physiologicalReaction>
</comment>
<comment type="catalytic activity">
    <reaction evidence="18">
        <text>a 2,3-saturated acyl-[ACP] + NADP(+) = a (2E)-enoyl-[ACP] + NADPH + H(+)</text>
        <dbReference type="Rhea" id="RHEA:22564"/>
        <dbReference type="Rhea" id="RHEA-COMP:9925"/>
        <dbReference type="Rhea" id="RHEA-COMP:9926"/>
        <dbReference type="ChEBI" id="CHEBI:15378"/>
        <dbReference type="ChEBI" id="CHEBI:57783"/>
        <dbReference type="ChEBI" id="CHEBI:58349"/>
        <dbReference type="ChEBI" id="CHEBI:78784"/>
        <dbReference type="ChEBI" id="CHEBI:78785"/>
        <dbReference type="EC" id="1.3.1.39"/>
    </reaction>
    <physiologicalReaction direction="right-to-left" evidence="18">
        <dbReference type="Rhea" id="RHEA:22566"/>
    </physiologicalReaction>
</comment>
<comment type="catalytic activity">
    <reaction evidence="14 15 18">
        <text>hexadecanoyl-[ACP] + H2O = hexadecanoate + holo-[ACP] + H(+)</text>
        <dbReference type="Rhea" id="RHEA:41932"/>
        <dbReference type="Rhea" id="RHEA-COMP:9652"/>
        <dbReference type="Rhea" id="RHEA-COMP:9685"/>
        <dbReference type="ChEBI" id="CHEBI:7896"/>
        <dbReference type="ChEBI" id="CHEBI:15377"/>
        <dbReference type="ChEBI" id="CHEBI:15378"/>
        <dbReference type="ChEBI" id="CHEBI:64479"/>
        <dbReference type="ChEBI" id="CHEBI:78483"/>
        <dbReference type="EC" id="3.1.2.14"/>
    </reaction>
    <physiologicalReaction direction="left-to-right" evidence="14 15 18">
        <dbReference type="Rhea" id="RHEA:41933"/>
    </physiologicalReaction>
</comment>
<comment type="catalytic activity">
    <reaction evidence="3">
        <text>acetyl-[ACP] + malonyl-[ACP] + H(+) = 3-oxobutanoyl-[ACP] + holo-[ACP] + CO2</text>
        <dbReference type="Rhea" id="RHEA:41800"/>
        <dbReference type="Rhea" id="RHEA-COMP:9621"/>
        <dbReference type="Rhea" id="RHEA-COMP:9623"/>
        <dbReference type="Rhea" id="RHEA-COMP:9625"/>
        <dbReference type="Rhea" id="RHEA-COMP:9685"/>
        <dbReference type="ChEBI" id="CHEBI:15378"/>
        <dbReference type="ChEBI" id="CHEBI:16526"/>
        <dbReference type="ChEBI" id="CHEBI:64479"/>
        <dbReference type="ChEBI" id="CHEBI:78446"/>
        <dbReference type="ChEBI" id="CHEBI:78449"/>
        <dbReference type="ChEBI" id="CHEBI:78450"/>
    </reaction>
    <physiologicalReaction direction="left-to-right" evidence="3">
        <dbReference type="Rhea" id="RHEA:41801"/>
    </physiologicalReaction>
</comment>
<comment type="catalytic activity">
    <reaction evidence="16 17 18">
        <text>3-oxobutanoyl-[ACP] + NADPH + H(+) = (3R)-hydroxybutanoyl-[ACP] + NADP(+)</text>
        <dbReference type="Rhea" id="RHEA:41804"/>
        <dbReference type="Rhea" id="RHEA-COMP:9625"/>
        <dbReference type="Rhea" id="RHEA-COMP:9626"/>
        <dbReference type="ChEBI" id="CHEBI:15378"/>
        <dbReference type="ChEBI" id="CHEBI:57783"/>
        <dbReference type="ChEBI" id="CHEBI:58349"/>
        <dbReference type="ChEBI" id="CHEBI:78450"/>
        <dbReference type="ChEBI" id="CHEBI:78451"/>
    </reaction>
    <physiologicalReaction direction="left-to-right" evidence="16 17 18">
        <dbReference type="Rhea" id="RHEA:41805"/>
    </physiologicalReaction>
</comment>
<comment type="catalytic activity">
    <reaction evidence="16 18">
        <text>(3R)-hydroxybutanoyl-[ACP] = (2E)-butenoyl-[ACP] + H2O</text>
        <dbReference type="Rhea" id="RHEA:41808"/>
        <dbReference type="Rhea" id="RHEA-COMP:9626"/>
        <dbReference type="Rhea" id="RHEA-COMP:9627"/>
        <dbReference type="ChEBI" id="CHEBI:15377"/>
        <dbReference type="ChEBI" id="CHEBI:78451"/>
        <dbReference type="ChEBI" id="CHEBI:78453"/>
    </reaction>
    <physiologicalReaction direction="left-to-right" evidence="16 18">
        <dbReference type="Rhea" id="RHEA:41809"/>
    </physiologicalReaction>
</comment>
<comment type="catalytic activity">
    <reaction evidence="3">
        <text>(2E)-butenoyl-[ACP] + NADPH + H(+) = butanoyl-[ACP] + NADP(+)</text>
        <dbReference type="Rhea" id="RHEA:41812"/>
        <dbReference type="Rhea" id="RHEA-COMP:9627"/>
        <dbReference type="Rhea" id="RHEA-COMP:9628"/>
        <dbReference type="ChEBI" id="CHEBI:15378"/>
        <dbReference type="ChEBI" id="CHEBI:57783"/>
        <dbReference type="ChEBI" id="CHEBI:58349"/>
        <dbReference type="ChEBI" id="CHEBI:78453"/>
        <dbReference type="ChEBI" id="CHEBI:78454"/>
    </reaction>
    <physiologicalReaction direction="left-to-right" evidence="3">
        <dbReference type="Rhea" id="RHEA:41813"/>
    </physiologicalReaction>
</comment>
<comment type="catalytic activity">
    <reaction evidence="3">
        <text>butanoyl-[ACP] + malonyl-[ACP] + H(+) = 3-oxohexanoyl-[ACP] + holo-[ACP] + CO2</text>
        <dbReference type="Rhea" id="RHEA:41820"/>
        <dbReference type="Rhea" id="RHEA-COMP:9623"/>
        <dbReference type="Rhea" id="RHEA-COMP:9628"/>
        <dbReference type="Rhea" id="RHEA-COMP:9629"/>
        <dbReference type="Rhea" id="RHEA-COMP:9685"/>
        <dbReference type="ChEBI" id="CHEBI:15378"/>
        <dbReference type="ChEBI" id="CHEBI:16526"/>
        <dbReference type="ChEBI" id="CHEBI:64479"/>
        <dbReference type="ChEBI" id="CHEBI:78449"/>
        <dbReference type="ChEBI" id="CHEBI:78454"/>
        <dbReference type="ChEBI" id="CHEBI:78456"/>
    </reaction>
    <physiologicalReaction direction="left-to-right" evidence="3">
        <dbReference type="Rhea" id="RHEA:41821"/>
    </physiologicalReaction>
</comment>
<comment type="catalytic activity">
    <reaction evidence="3">
        <text>3-oxohexanoyl-[ACP] + NADPH + H(+) = (3R)-hydroxyhexanoyl-[ACP] + NADP(+)</text>
        <dbReference type="Rhea" id="RHEA:41824"/>
        <dbReference type="Rhea" id="RHEA-COMP:9629"/>
        <dbReference type="Rhea" id="RHEA-COMP:9630"/>
        <dbReference type="ChEBI" id="CHEBI:15378"/>
        <dbReference type="ChEBI" id="CHEBI:57783"/>
        <dbReference type="ChEBI" id="CHEBI:58349"/>
        <dbReference type="ChEBI" id="CHEBI:78456"/>
        <dbReference type="ChEBI" id="CHEBI:78457"/>
    </reaction>
    <physiologicalReaction direction="left-to-right" evidence="3">
        <dbReference type="Rhea" id="RHEA:41825"/>
    </physiologicalReaction>
</comment>
<comment type="catalytic activity">
    <reaction evidence="3">
        <text>(3R)-hydroxyhexanoyl-[ACP] = (2E)-hexenoyl-[ACP] + H2O</text>
        <dbReference type="Rhea" id="RHEA:41828"/>
        <dbReference type="Rhea" id="RHEA-COMP:9630"/>
        <dbReference type="Rhea" id="RHEA-COMP:9631"/>
        <dbReference type="ChEBI" id="CHEBI:15377"/>
        <dbReference type="ChEBI" id="CHEBI:78457"/>
        <dbReference type="ChEBI" id="CHEBI:78458"/>
    </reaction>
    <physiologicalReaction direction="left-to-right" evidence="3">
        <dbReference type="Rhea" id="RHEA:41829"/>
    </physiologicalReaction>
</comment>
<comment type="catalytic activity">
    <reaction evidence="3">
        <text>(2E)-hexenoyl-[ACP] + NADPH + H(+) = hexanoyl-[ACP] + NADP(+)</text>
        <dbReference type="Rhea" id="RHEA:41832"/>
        <dbReference type="Rhea" id="RHEA-COMP:9631"/>
        <dbReference type="Rhea" id="RHEA-COMP:9632"/>
        <dbReference type="ChEBI" id="CHEBI:15378"/>
        <dbReference type="ChEBI" id="CHEBI:57783"/>
        <dbReference type="ChEBI" id="CHEBI:58349"/>
        <dbReference type="ChEBI" id="CHEBI:78458"/>
        <dbReference type="ChEBI" id="CHEBI:78459"/>
    </reaction>
    <physiologicalReaction direction="left-to-right" evidence="3">
        <dbReference type="Rhea" id="RHEA:41833"/>
    </physiologicalReaction>
</comment>
<comment type="catalytic activity">
    <reaction evidence="3">
        <text>hexanoyl-[ACP] + malonyl-[ACP] + H(+) = 3-oxooctanoyl-[ACP] + holo-[ACP] + CO2</text>
        <dbReference type="Rhea" id="RHEA:41836"/>
        <dbReference type="Rhea" id="RHEA-COMP:9623"/>
        <dbReference type="Rhea" id="RHEA-COMP:9632"/>
        <dbReference type="Rhea" id="RHEA-COMP:9633"/>
        <dbReference type="Rhea" id="RHEA-COMP:9685"/>
        <dbReference type="ChEBI" id="CHEBI:15378"/>
        <dbReference type="ChEBI" id="CHEBI:16526"/>
        <dbReference type="ChEBI" id="CHEBI:64479"/>
        <dbReference type="ChEBI" id="CHEBI:78449"/>
        <dbReference type="ChEBI" id="CHEBI:78459"/>
        <dbReference type="ChEBI" id="CHEBI:78460"/>
    </reaction>
    <physiologicalReaction direction="left-to-right" evidence="3">
        <dbReference type="Rhea" id="RHEA:41837"/>
    </physiologicalReaction>
</comment>
<comment type="catalytic activity">
    <reaction evidence="3">
        <text>3-oxooctanoyl-[ACP] + NADPH + H(+) = (3R)-hydroxyoctanoyl-[ACP] + NADP(+)</text>
        <dbReference type="Rhea" id="RHEA:41840"/>
        <dbReference type="Rhea" id="RHEA-COMP:9633"/>
        <dbReference type="Rhea" id="RHEA-COMP:9634"/>
        <dbReference type="ChEBI" id="CHEBI:15378"/>
        <dbReference type="ChEBI" id="CHEBI:57783"/>
        <dbReference type="ChEBI" id="CHEBI:58349"/>
        <dbReference type="ChEBI" id="CHEBI:78460"/>
        <dbReference type="ChEBI" id="CHEBI:78461"/>
    </reaction>
    <physiologicalReaction direction="left-to-right" evidence="3">
        <dbReference type="Rhea" id="RHEA:41841"/>
    </physiologicalReaction>
</comment>
<comment type="catalytic activity">
    <reaction evidence="3">
        <text>(3R)-hydroxyoctanoyl-[ACP] = (2E)-octenoyl-[ACP] + H2O</text>
        <dbReference type="Rhea" id="RHEA:41844"/>
        <dbReference type="Rhea" id="RHEA-COMP:9634"/>
        <dbReference type="Rhea" id="RHEA-COMP:9635"/>
        <dbReference type="ChEBI" id="CHEBI:15377"/>
        <dbReference type="ChEBI" id="CHEBI:78461"/>
        <dbReference type="ChEBI" id="CHEBI:78462"/>
    </reaction>
    <physiologicalReaction direction="left-to-right" evidence="3">
        <dbReference type="Rhea" id="RHEA:41845"/>
    </physiologicalReaction>
</comment>
<comment type="catalytic activity">
    <reaction evidence="3">
        <text>(2E)-octenoyl-[ACP] + NADPH + H(+) = octanoyl-[ACP] + NADP(+)</text>
        <dbReference type="Rhea" id="RHEA:41848"/>
        <dbReference type="Rhea" id="RHEA-COMP:9635"/>
        <dbReference type="Rhea" id="RHEA-COMP:9636"/>
        <dbReference type="ChEBI" id="CHEBI:15378"/>
        <dbReference type="ChEBI" id="CHEBI:57783"/>
        <dbReference type="ChEBI" id="CHEBI:58349"/>
        <dbReference type="ChEBI" id="CHEBI:78462"/>
        <dbReference type="ChEBI" id="CHEBI:78463"/>
    </reaction>
    <physiologicalReaction direction="left-to-right" evidence="3">
        <dbReference type="Rhea" id="RHEA:41849"/>
    </physiologicalReaction>
</comment>
<comment type="catalytic activity">
    <reaction evidence="3">
        <text>octanoyl-[ACP] + malonyl-[ACP] + H(+) = 3-oxodecanoyl-[ACP] + holo-[ACP] + CO2</text>
        <dbReference type="Rhea" id="RHEA:41852"/>
        <dbReference type="Rhea" id="RHEA-COMP:9623"/>
        <dbReference type="Rhea" id="RHEA-COMP:9636"/>
        <dbReference type="Rhea" id="RHEA-COMP:9637"/>
        <dbReference type="Rhea" id="RHEA-COMP:9685"/>
        <dbReference type="ChEBI" id="CHEBI:15378"/>
        <dbReference type="ChEBI" id="CHEBI:16526"/>
        <dbReference type="ChEBI" id="CHEBI:64479"/>
        <dbReference type="ChEBI" id="CHEBI:78449"/>
        <dbReference type="ChEBI" id="CHEBI:78463"/>
        <dbReference type="ChEBI" id="CHEBI:78464"/>
    </reaction>
    <physiologicalReaction direction="left-to-right" evidence="3">
        <dbReference type="Rhea" id="RHEA:41853"/>
    </physiologicalReaction>
</comment>
<comment type="catalytic activity">
    <reaction evidence="3">
        <text>3-oxodecanoyl-[ACP] + NADPH + H(+) = (3R)-hydroxydecanoyl-[ACP] + NADP(+)</text>
        <dbReference type="Rhea" id="RHEA:41856"/>
        <dbReference type="Rhea" id="RHEA-COMP:9637"/>
        <dbReference type="Rhea" id="RHEA-COMP:9638"/>
        <dbReference type="ChEBI" id="CHEBI:15378"/>
        <dbReference type="ChEBI" id="CHEBI:57783"/>
        <dbReference type="ChEBI" id="CHEBI:58349"/>
        <dbReference type="ChEBI" id="CHEBI:78464"/>
        <dbReference type="ChEBI" id="CHEBI:78466"/>
    </reaction>
    <physiologicalReaction direction="left-to-right" evidence="3">
        <dbReference type="Rhea" id="RHEA:41857"/>
    </physiologicalReaction>
</comment>
<comment type="catalytic activity">
    <reaction evidence="3">
        <text>(3R)-hydroxydecanoyl-[ACP] = (2E)-decenoyl-[ACP] + H2O</text>
        <dbReference type="Rhea" id="RHEA:41860"/>
        <dbReference type="Rhea" id="RHEA-COMP:9638"/>
        <dbReference type="Rhea" id="RHEA-COMP:9639"/>
        <dbReference type="ChEBI" id="CHEBI:15377"/>
        <dbReference type="ChEBI" id="CHEBI:78466"/>
        <dbReference type="ChEBI" id="CHEBI:78467"/>
    </reaction>
    <physiologicalReaction direction="left-to-right" evidence="3">
        <dbReference type="Rhea" id="RHEA:41861"/>
    </physiologicalReaction>
</comment>
<comment type="catalytic activity">
    <reaction evidence="3">
        <text>(2E)-decenoyl-[ACP] + NADPH + H(+) = decanoyl-[ACP] + NADP(+)</text>
        <dbReference type="Rhea" id="RHEA:41864"/>
        <dbReference type="Rhea" id="RHEA-COMP:9639"/>
        <dbReference type="Rhea" id="RHEA-COMP:9640"/>
        <dbReference type="ChEBI" id="CHEBI:15378"/>
        <dbReference type="ChEBI" id="CHEBI:57783"/>
        <dbReference type="ChEBI" id="CHEBI:58349"/>
        <dbReference type="ChEBI" id="CHEBI:78467"/>
        <dbReference type="ChEBI" id="CHEBI:78468"/>
    </reaction>
    <physiologicalReaction direction="left-to-right" evidence="3">
        <dbReference type="Rhea" id="RHEA:41865"/>
    </physiologicalReaction>
</comment>
<comment type="catalytic activity">
    <reaction evidence="3">
        <text>decanoyl-[ACP] + malonyl-[ACP] + H(+) = 3-oxododecanoyl-[ACP] + holo-[ACP] + CO2</text>
        <dbReference type="Rhea" id="RHEA:41868"/>
        <dbReference type="Rhea" id="RHEA-COMP:9623"/>
        <dbReference type="Rhea" id="RHEA-COMP:9640"/>
        <dbReference type="Rhea" id="RHEA-COMP:9641"/>
        <dbReference type="Rhea" id="RHEA-COMP:9685"/>
        <dbReference type="ChEBI" id="CHEBI:15378"/>
        <dbReference type="ChEBI" id="CHEBI:16526"/>
        <dbReference type="ChEBI" id="CHEBI:64479"/>
        <dbReference type="ChEBI" id="CHEBI:78449"/>
        <dbReference type="ChEBI" id="CHEBI:78468"/>
        <dbReference type="ChEBI" id="CHEBI:78469"/>
    </reaction>
    <physiologicalReaction direction="left-to-right" evidence="3">
        <dbReference type="Rhea" id="RHEA:41869"/>
    </physiologicalReaction>
</comment>
<comment type="catalytic activity">
    <reaction evidence="3">
        <text>3-oxododecanoyl-[ACP] + NADPH + H(+) = (3R)-hydroxydodecanoyl-[ACP] + NADP(+)</text>
        <dbReference type="Rhea" id="RHEA:41872"/>
        <dbReference type="Rhea" id="RHEA-COMP:9641"/>
        <dbReference type="Rhea" id="RHEA-COMP:9642"/>
        <dbReference type="ChEBI" id="CHEBI:15378"/>
        <dbReference type="ChEBI" id="CHEBI:57783"/>
        <dbReference type="ChEBI" id="CHEBI:58349"/>
        <dbReference type="ChEBI" id="CHEBI:78469"/>
        <dbReference type="ChEBI" id="CHEBI:78470"/>
    </reaction>
    <physiologicalReaction direction="left-to-right" evidence="3">
        <dbReference type="Rhea" id="RHEA:41873"/>
    </physiologicalReaction>
</comment>
<comment type="catalytic activity">
    <reaction evidence="3">
        <text>(3R)-hydroxydodecanoyl-[ACP] = (2E)-dodecenoyl-[ACP] + H2O</text>
        <dbReference type="Rhea" id="RHEA:41876"/>
        <dbReference type="Rhea" id="RHEA-COMP:9642"/>
        <dbReference type="Rhea" id="RHEA-COMP:9643"/>
        <dbReference type="ChEBI" id="CHEBI:15377"/>
        <dbReference type="ChEBI" id="CHEBI:78470"/>
        <dbReference type="ChEBI" id="CHEBI:78472"/>
    </reaction>
    <physiologicalReaction direction="left-to-right" evidence="3">
        <dbReference type="Rhea" id="RHEA:41877"/>
    </physiologicalReaction>
</comment>
<comment type="catalytic activity">
    <reaction evidence="3">
        <text>(2E)-dodecenoyl-[ACP] + NADPH + H(+) = dodecanoyl-[ACP] + NADP(+)</text>
        <dbReference type="Rhea" id="RHEA:41880"/>
        <dbReference type="Rhea" id="RHEA-COMP:9643"/>
        <dbReference type="Rhea" id="RHEA-COMP:9644"/>
        <dbReference type="ChEBI" id="CHEBI:15378"/>
        <dbReference type="ChEBI" id="CHEBI:57783"/>
        <dbReference type="ChEBI" id="CHEBI:58349"/>
        <dbReference type="ChEBI" id="CHEBI:65264"/>
        <dbReference type="ChEBI" id="CHEBI:78472"/>
    </reaction>
    <physiologicalReaction direction="left-to-right" evidence="3">
        <dbReference type="Rhea" id="RHEA:41881"/>
    </physiologicalReaction>
</comment>
<comment type="catalytic activity">
    <reaction evidence="3">
        <text>dodecanoyl-[ACP] + malonyl-[ACP] + H(+) = 3-oxotetradecanoyl-[ACP] + holo-[ACP] + CO2</text>
        <dbReference type="Rhea" id="RHEA:41884"/>
        <dbReference type="Rhea" id="RHEA-COMP:9623"/>
        <dbReference type="Rhea" id="RHEA-COMP:9644"/>
        <dbReference type="Rhea" id="RHEA-COMP:9645"/>
        <dbReference type="Rhea" id="RHEA-COMP:9685"/>
        <dbReference type="ChEBI" id="CHEBI:15378"/>
        <dbReference type="ChEBI" id="CHEBI:16526"/>
        <dbReference type="ChEBI" id="CHEBI:64479"/>
        <dbReference type="ChEBI" id="CHEBI:65264"/>
        <dbReference type="ChEBI" id="CHEBI:78449"/>
        <dbReference type="ChEBI" id="CHEBI:78473"/>
    </reaction>
    <physiologicalReaction direction="left-to-right" evidence="3">
        <dbReference type="Rhea" id="RHEA:41885"/>
    </physiologicalReaction>
</comment>
<comment type="catalytic activity">
    <reaction evidence="3">
        <text>3-oxotetradecanoyl-[ACP] + NADPH + H(+) = (3R)-hydroxytetradecanoyl-[ACP] + NADP(+)</text>
        <dbReference type="Rhea" id="RHEA:41888"/>
        <dbReference type="Rhea" id="RHEA-COMP:9645"/>
        <dbReference type="Rhea" id="RHEA-COMP:9646"/>
        <dbReference type="ChEBI" id="CHEBI:15378"/>
        <dbReference type="ChEBI" id="CHEBI:57783"/>
        <dbReference type="ChEBI" id="CHEBI:58349"/>
        <dbReference type="ChEBI" id="CHEBI:78473"/>
        <dbReference type="ChEBI" id="CHEBI:78474"/>
    </reaction>
    <physiologicalReaction direction="left-to-right" evidence="3">
        <dbReference type="Rhea" id="RHEA:41889"/>
    </physiologicalReaction>
</comment>
<comment type="catalytic activity">
    <reaction evidence="3">
        <text>(3R)-hydroxytetradecanoyl-[ACP] = (2E)-tetradecenoyl-[ACP] + H2O</text>
        <dbReference type="Rhea" id="RHEA:41892"/>
        <dbReference type="Rhea" id="RHEA-COMP:9646"/>
        <dbReference type="Rhea" id="RHEA-COMP:9647"/>
        <dbReference type="ChEBI" id="CHEBI:15377"/>
        <dbReference type="ChEBI" id="CHEBI:78474"/>
        <dbReference type="ChEBI" id="CHEBI:78475"/>
    </reaction>
    <physiologicalReaction direction="left-to-right" evidence="3">
        <dbReference type="Rhea" id="RHEA:41893"/>
    </physiologicalReaction>
</comment>
<comment type="catalytic activity">
    <reaction evidence="3">
        <text>(2E)-tetradecenoyl-[ACP] + NADPH + H(+) = tetradecanoyl-[ACP] + NADP(+)</text>
        <dbReference type="Rhea" id="RHEA:41896"/>
        <dbReference type="Rhea" id="RHEA-COMP:9647"/>
        <dbReference type="Rhea" id="RHEA-COMP:9648"/>
        <dbReference type="ChEBI" id="CHEBI:15378"/>
        <dbReference type="ChEBI" id="CHEBI:57783"/>
        <dbReference type="ChEBI" id="CHEBI:58349"/>
        <dbReference type="ChEBI" id="CHEBI:78475"/>
        <dbReference type="ChEBI" id="CHEBI:78477"/>
    </reaction>
    <physiologicalReaction direction="left-to-right" evidence="3">
        <dbReference type="Rhea" id="RHEA:41897"/>
    </physiologicalReaction>
</comment>
<comment type="catalytic activity">
    <reaction evidence="3">
        <text>tetradecanoyl-[ACP] + malonyl-[ACP] + H(+) = 3-oxohexadecanoyl-[ACP] + holo-[ACP] + CO2</text>
        <dbReference type="Rhea" id="RHEA:41900"/>
        <dbReference type="Rhea" id="RHEA-COMP:9623"/>
        <dbReference type="Rhea" id="RHEA-COMP:9648"/>
        <dbReference type="Rhea" id="RHEA-COMP:9649"/>
        <dbReference type="Rhea" id="RHEA-COMP:9685"/>
        <dbReference type="ChEBI" id="CHEBI:15378"/>
        <dbReference type="ChEBI" id="CHEBI:16526"/>
        <dbReference type="ChEBI" id="CHEBI:64479"/>
        <dbReference type="ChEBI" id="CHEBI:78449"/>
        <dbReference type="ChEBI" id="CHEBI:78477"/>
        <dbReference type="ChEBI" id="CHEBI:78478"/>
    </reaction>
    <physiologicalReaction direction="left-to-right" evidence="3">
        <dbReference type="Rhea" id="RHEA:41901"/>
    </physiologicalReaction>
</comment>
<comment type="catalytic activity">
    <reaction evidence="3">
        <text>3-oxohexadecanoyl-[ACP] + NADPH + H(+) = (3R)-hydroxyhexadecanoyl-[ACP] + NADP(+)</text>
        <dbReference type="Rhea" id="RHEA:41904"/>
        <dbReference type="Rhea" id="RHEA-COMP:9649"/>
        <dbReference type="Rhea" id="RHEA-COMP:9650"/>
        <dbReference type="ChEBI" id="CHEBI:15378"/>
        <dbReference type="ChEBI" id="CHEBI:57783"/>
        <dbReference type="ChEBI" id="CHEBI:58349"/>
        <dbReference type="ChEBI" id="CHEBI:78478"/>
        <dbReference type="ChEBI" id="CHEBI:78480"/>
    </reaction>
    <physiologicalReaction direction="left-to-right" evidence="3">
        <dbReference type="Rhea" id="RHEA:41905"/>
    </physiologicalReaction>
</comment>
<comment type="catalytic activity">
    <reaction evidence="3">
        <text>(3R)-hydroxyhexadecanoyl-[ACP] = (2E)-hexadecenoyl-[ACP] + H2O</text>
        <dbReference type="Rhea" id="RHEA:41908"/>
        <dbReference type="Rhea" id="RHEA-COMP:9650"/>
        <dbReference type="Rhea" id="RHEA-COMP:9651"/>
        <dbReference type="ChEBI" id="CHEBI:15377"/>
        <dbReference type="ChEBI" id="CHEBI:78480"/>
        <dbReference type="ChEBI" id="CHEBI:78481"/>
    </reaction>
    <physiologicalReaction direction="left-to-right" evidence="3">
        <dbReference type="Rhea" id="RHEA:41909"/>
    </physiologicalReaction>
</comment>
<comment type="catalytic activity">
    <reaction evidence="3">
        <text>(2E)-hexadecenoyl-[ACP] + NADPH + H(+) = hexadecanoyl-[ACP] + NADP(+)</text>
        <dbReference type="Rhea" id="RHEA:41912"/>
        <dbReference type="Rhea" id="RHEA-COMP:9651"/>
        <dbReference type="Rhea" id="RHEA-COMP:9652"/>
        <dbReference type="ChEBI" id="CHEBI:15378"/>
        <dbReference type="ChEBI" id="CHEBI:57783"/>
        <dbReference type="ChEBI" id="CHEBI:58349"/>
        <dbReference type="ChEBI" id="CHEBI:78481"/>
        <dbReference type="ChEBI" id="CHEBI:78483"/>
    </reaction>
    <physiologicalReaction direction="left-to-right" evidence="3">
        <dbReference type="Rhea" id="RHEA:41913"/>
    </physiologicalReaction>
</comment>
<comment type="catalytic activity">
    <reaction evidence="3">
        <text>hexadecanoyl-[ACP] + malonyl-[ACP] + H(+) = 3-oxooctadecanoyl-[ACP] + holo-[ACP] + CO2</text>
        <dbReference type="Rhea" id="RHEA:41916"/>
        <dbReference type="Rhea" id="RHEA-COMP:9623"/>
        <dbReference type="Rhea" id="RHEA-COMP:9652"/>
        <dbReference type="Rhea" id="RHEA-COMP:9653"/>
        <dbReference type="Rhea" id="RHEA-COMP:9685"/>
        <dbReference type="ChEBI" id="CHEBI:15378"/>
        <dbReference type="ChEBI" id="CHEBI:16526"/>
        <dbReference type="ChEBI" id="CHEBI:64479"/>
        <dbReference type="ChEBI" id="CHEBI:78449"/>
        <dbReference type="ChEBI" id="CHEBI:78483"/>
        <dbReference type="ChEBI" id="CHEBI:78487"/>
    </reaction>
    <physiologicalReaction direction="left-to-right" evidence="3">
        <dbReference type="Rhea" id="RHEA:41917"/>
    </physiologicalReaction>
</comment>
<comment type="catalytic activity">
    <reaction evidence="3">
        <text>3-oxooctadecanoyl-[ACP] + NADPH + H(+) = (3R)-hydroxyoctadecanoyl-[ACP] + NADP(+)</text>
        <dbReference type="Rhea" id="RHEA:41920"/>
        <dbReference type="Rhea" id="RHEA-COMP:9653"/>
        <dbReference type="Rhea" id="RHEA-COMP:9654"/>
        <dbReference type="ChEBI" id="CHEBI:15378"/>
        <dbReference type="ChEBI" id="CHEBI:57783"/>
        <dbReference type="ChEBI" id="CHEBI:58349"/>
        <dbReference type="ChEBI" id="CHEBI:78487"/>
        <dbReference type="ChEBI" id="CHEBI:78488"/>
    </reaction>
    <physiologicalReaction direction="left-to-right" evidence="3">
        <dbReference type="Rhea" id="RHEA:41921"/>
    </physiologicalReaction>
</comment>
<comment type="catalytic activity">
    <reaction evidence="3">
        <text>(3R)-hydroxyoctadecanoyl-[ACP] = (2E)-octadecenoyl-[ACP] + H2O</text>
        <dbReference type="Rhea" id="RHEA:41924"/>
        <dbReference type="Rhea" id="RHEA-COMP:9654"/>
        <dbReference type="Rhea" id="RHEA-COMP:9655"/>
        <dbReference type="ChEBI" id="CHEBI:15377"/>
        <dbReference type="ChEBI" id="CHEBI:78488"/>
        <dbReference type="ChEBI" id="CHEBI:78489"/>
    </reaction>
    <physiologicalReaction direction="left-to-right" evidence="3">
        <dbReference type="Rhea" id="RHEA:41925"/>
    </physiologicalReaction>
</comment>
<comment type="catalytic activity">
    <reaction evidence="3">
        <text>(2E)-octadecenoyl-[ACP] + NADPH + H(+) = octadecanoyl-[ACP] + NADP(+)</text>
        <dbReference type="Rhea" id="RHEA:41928"/>
        <dbReference type="Rhea" id="RHEA-COMP:9655"/>
        <dbReference type="Rhea" id="RHEA-COMP:9656"/>
        <dbReference type="ChEBI" id="CHEBI:15378"/>
        <dbReference type="ChEBI" id="CHEBI:57783"/>
        <dbReference type="ChEBI" id="CHEBI:58349"/>
        <dbReference type="ChEBI" id="CHEBI:78489"/>
        <dbReference type="ChEBI" id="CHEBI:78495"/>
    </reaction>
    <physiologicalReaction direction="left-to-right" evidence="3">
        <dbReference type="Rhea" id="RHEA:41929"/>
    </physiologicalReaction>
</comment>
<comment type="catalytic activity">
    <reaction evidence="3">
        <text>tetradecanoyl-[ACP] + H2O = tetradecanoate + holo-[ACP] + H(+)</text>
        <dbReference type="Rhea" id="RHEA:30123"/>
        <dbReference type="Rhea" id="RHEA-COMP:9648"/>
        <dbReference type="Rhea" id="RHEA-COMP:9685"/>
        <dbReference type="ChEBI" id="CHEBI:15377"/>
        <dbReference type="ChEBI" id="CHEBI:15378"/>
        <dbReference type="ChEBI" id="CHEBI:30807"/>
        <dbReference type="ChEBI" id="CHEBI:64479"/>
        <dbReference type="ChEBI" id="CHEBI:78477"/>
        <dbReference type="EC" id="3.1.2.14"/>
    </reaction>
    <physiologicalReaction direction="left-to-right" evidence="3">
        <dbReference type="Rhea" id="RHEA:30124"/>
    </physiologicalReaction>
</comment>
<comment type="catalytic activity">
    <reaction evidence="15">
        <text>octadecanoyl-[ACP] + H2O = octadecanoate + holo-[ACP] + H(+)</text>
        <dbReference type="Rhea" id="RHEA:63204"/>
        <dbReference type="Rhea" id="RHEA-COMP:9656"/>
        <dbReference type="Rhea" id="RHEA-COMP:9685"/>
        <dbReference type="ChEBI" id="CHEBI:15377"/>
        <dbReference type="ChEBI" id="CHEBI:15378"/>
        <dbReference type="ChEBI" id="CHEBI:25629"/>
        <dbReference type="ChEBI" id="CHEBI:64479"/>
        <dbReference type="ChEBI" id="CHEBI:78495"/>
    </reaction>
    <physiologicalReaction direction="left-to-right" evidence="15">
        <dbReference type="Rhea" id="RHEA:63205"/>
    </physiologicalReaction>
</comment>
<comment type="activity regulation">
    <text evidence="11">Cerulenin, a potent non-competitive pharmacological inhibitor of FAS, binds covalently to the active site of the condensing enzyme region, inactivating a key enzyme step in fatty acid synthesis.</text>
</comment>
<comment type="pathway">
    <text evidence="8 9 10 11">Lipid metabolism; fatty acid biosynthesis.</text>
</comment>
<comment type="subunit">
    <text evidence="3">Homodimer which is arranged in a head to tail fashion.</text>
</comment>
<comment type="alternative products">
    <event type="alternative splicing"/>
    <isoform>
        <id>P12276-1</id>
        <name>2</name>
        <sequence type="displayed"/>
    </isoform>
    <isoform>
        <id>P12276-2</id>
        <name>1</name>
        <sequence type="described" ref="VSP_000149"/>
    </isoform>
</comment>
<comment type="PTM">
    <text evidence="3">S-nitrosylation of Fatty acid synthase at cysteine residues Cys-1475 or Cys-2093 is important for the enzyme dimerization. In adipocytes, S-nitrosylation of Fatty acid synthase occurs under physiological conditions and gradually increases during adipogenesis.</text>
</comment>
<comment type="sequence caution" evidence="13">
    <conflict type="frameshift">
        <sequence resource="EMBL-CDS" id="AAA82106"/>
    </conflict>
</comment>
<gene>
    <name type="primary">FASN</name>
    <name type="synonym">FAS</name>
</gene>
<accession>P12276</accession>
<protein>
    <recommendedName>
        <fullName>Fatty acid synthase</fullName>
        <ecNumber evidence="8 9 10 11">2.3.1.85</ecNumber>
    </recommendedName>
    <domain>
        <recommendedName>
            <fullName>[Acyl-carrier-protein] S-acetyltransferase</fullName>
            <ecNumber evidence="10 11">2.3.1.38</ecNumber>
        </recommendedName>
    </domain>
    <domain>
        <recommendedName>
            <fullName>[Acyl-carrier-protein] S-malonyltransferase</fullName>
            <ecNumber evidence="10 11">2.3.1.39</ecNumber>
        </recommendedName>
    </domain>
    <domain>
        <recommendedName>
            <fullName>3-oxoacyl-[acyl-carrier-protein] synthase</fullName>
            <ecNumber evidence="18">2.3.1.41</ecNumber>
        </recommendedName>
    </domain>
    <domain>
        <recommendedName>
            <fullName>3-oxoacyl-[acyl-carrier-protein] reductase</fullName>
            <ecNumber evidence="16 17 18">1.1.1.100</ecNumber>
        </recommendedName>
    </domain>
    <domain>
        <recommendedName>
            <fullName>3-hydroxyacyl-[acyl-carrier-protein] dehydratase</fullName>
            <ecNumber evidence="16 18">4.2.1.59</ecNumber>
        </recommendedName>
    </domain>
    <domain>
        <recommendedName>
            <fullName>Enoyl-[acyl-carrier-protein] reductase</fullName>
            <ecNumber evidence="18">1.3.1.39</ecNumber>
        </recommendedName>
    </domain>
    <domain>
        <recommendedName>
            <fullName>Acyl-[acyl-carrier-protein] hydrolase</fullName>
            <ecNumber evidence="14 15 18">3.1.2.14</ecNumber>
        </recommendedName>
    </domain>
</protein>